<accession>Q01X27</accession>
<gene>
    <name evidence="1" type="primary">nadD</name>
    <name type="ordered locus">Acid_4829</name>
</gene>
<comment type="function">
    <text evidence="1">Catalyzes the reversible adenylation of nicotinate mononucleotide (NaMN) to nicotinic acid adenine dinucleotide (NaAD).</text>
</comment>
<comment type="catalytic activity">
    <reaction evidence="1">
        <text>nicotinate beta-D-ribonucleotide + ATP + H(+) = deamido-NAD(+) + diphosphate</text>
        <dbReference type="Rhea" id="RHEA:22860"/>
        <dbReference type="ChEBI" id="CHEBI:15378"/>
        <dbReference type="ChEBI" id="CHEBI:30616"/>
        <dbReference type="ChEBI" id="CHEBI:33019"/>
        <dbReference type="ChEBI" id="CHEBI:57502"/>
        <dbReference type="ChEBI" id="CHEBI:58437"/>
        <dbReference type="EC" id="2.7.7.18"/>
    </reaction>
</comment>
<comment type="pathway">
    <text evidence="1">Cofactor biosynthesis; NAD(+) biosynthesis; deamido-NAD(+) from nicotinate D-ribonucleotide: step 1/1.</text>
</comment>
<comment type="similarity">
    <text evidence="1">Belongs to the NadD family.</text>
</comment>
<reference key="1">
    <citation type="journal article" date="2009" name="Appl. Environ. Microbiol.">
        <title>Three genomes from the phylum Acidobacteria provide insight into the lifestyles of these microorganisms in soils.</title>
        <authorList>
            <person name="Ward N.L."/>
            <person name="Challacombe J.F."/>
            <person name="Janssen P.H."/>
            <person name="Henrissat B."/>
            <person name="Coutinho P.M."/>
            <person name="Wu M."/>
            <person name="Xie G."/>
            <person name="Haft D.H."/>
            <person name="Sait M."/>
            <person name="Badger J."/>
            <person name="Barabote R.D."/>
            <person name="Bradley B."/>
            <person name="Brettin T.S."/>
            <person name="Brinkac L.M."/>
            <person name="Bruce D."/>
            <person name="Creasy T."/>
            <person name="Daugherty S.C."/>
            <person name="Davidsen T.M."/>
            <person name="DeBoy R.T."/>
            <person name="Detter J.C."/>
            <person name="Dodson R.J."/>
            <person name="Durkin A.S."/>
            <person name="Ganapathy A."/>
            <person name="Gwinn-Giglio M."/>
            <person name="Han C.S."/>
            <person name="Khouri H."/>
            <person name="Kiss H."/>
            <person name="Kothari S.P."/>
            <person name="Madupu R."/>
            <person name="Nelson K.E."/>
            <person name="Nelson W.C."/>
            <person name="Paulsen I."/>
            <person name="Penn K."/>
            <person name="Ren Q."/>
            <person name="Rosovitz M.J."/>
            <person name="Selengut J.D."/>
            <person name="Shrivastava S."/>
            <person name="Sullivan S.A."/>
            <person name="Tapia R."/>
            <person name="Thompson L.S."/>
            <person name="Watkins K.L."/>
            <person name="Yang Q."/>
            <person name="Yu C."/>
            <person name="Zafar N."/>
            <person name="Zhou L."/>
            <person name="Kuske C.R."/>
        </authorList>
    </citation>
    <scope>NUCLEOTIDE SEQUENCE [LARGE SCALE GENOMIC DNA]</scope>
    <source>
        <strain>Ellin6076</strain>
    </source>
</reference>
<keyword id="KW-0067">ATP-binding</keyword>
<keyword id="KW-0520">NAD</keyword>
<keyword id="KW-0547">Nucleotide-binding</keyword>
<keyword id="KW-0548">Nucleotidyltransferase</keyword>
<keyword id="KW-0662">Pyridine nucleotide biosynthesis</keyword>
<keyword id="KW-0808">Transferase</keyword>
<name>NADD_SOLUE</name>
<evidence type="ECO:0000255" key="1">
    <source>
        <dbReference type="HAMAP-Rule" id="MF_00244"/>
    </source>
</evidence>
<feature type="chain" id="PRO_1000058996" description="Probable nicotinate-nucleotide adenylyltransferase">
    <location>
        <begin position="1"/>
        <end position="188"/>
    </location>
</feature>
<sequence>MKLAIFGGTFDPIHAGHLAAAREASTRFALDRVLFIPAAHPPHKAGVTHAPYDDRVRMAELACRDDARFEVSRLEEGTARSYSIDTIEKVRAMLAPGDGLYFLIGADAFAEIRTWRRWTDVARAVRFLVVSRPGHTYEIPAEVTVDRIDSLEIPISSSEIRRTLAAGGIPEGLPPAVLAYARDHHLYN</sequence>
<organism>
    <name type="scientific">Solibacter usitatus (strain Ellin6076)</name>
    <dbReference type="NCBI Taxonomy" id="234267"/>
    <lineage>
        <taxon>Bacteria</taxon>
        <taxon>Pseudomonadati</taxon>
        <taxon>Acidobacteriota</taxon>
        <taxon>Terriglobia</taxon>
        <taxon>Bryobacterales</taxon>
        <taxon>Solibacteraceae</taxon>
        <taxon>Candidatus Solibacter</taxon>
    </lineage>
</organism>
<proteinExistence type="inferred from homology"/>
<protein>
    <recommendedName>
        <fullName evidence="1">Probable nicotinate-nucleotide adenylyltransferase</fullName>
        <ecNumber evidence="1">2.7.7.18</ecNumber>
    </recommendedName>
    <alternativeName>
        <fullName evidence="1">Deamido-NAD(+) diphosphorylase</fullName>
    </alternativeName>
    <alternativeName>
        <fullName evidence="1">Deamido-NAD(+) pyrophosphorylase</fullName>
    </alternativeName>
    <alternativeName>
        <fullName evidence="1">Nicotinate mononucleotide adenylyltransferase</fullName>
        <shortName evidence="1">NaMN adenylyltransferase</shortName>
    </alternativeName>
</protein>
<dbReference type="EC" id="2.7.7.18" evidence="1"/>
<dbReference type="EMBL" id="CP000473">
    <property type="protein sequence ID" value="ABJ85788.1"/>
    <property type="molecule type" value="Genomic_DNA"/>
</dbReference>
<dbReference type="SMR" id="Q01X27"/>
<dbReference type="FunCoup" id="Q01X27">
    <property type="interactions" value="317"/>
</dbReference>
<dbReference type="STRING" id="234267.Acid_4829"/>
<dbReference type="KEGG" id="sus:Acid_4829"/>
<dbReference type="eggNOG" id="COG1057">
    <property type="taxonomic scope" value="Bacteria"/>
</dbReference>
<dbReference type="HOGENOM" id="CLU_069765_1_1_0"/>
<dbReference type="InParanoid" id="Q01X27"/>
<dbReference type="OrthoDB" id="5295945at2"/>
<dbReference type="UniPathway" id="UPA00253">
    <property type="reaction ID" value="UER00332"/>
</dbReference>
<dbReference type="GO" id="GO:0005524">
    <property type="term" value="F:ATP binding"/>
    <property type="evidence" value="ECO:0007669"/>
    <property type="project" value="UniProtKB-KW"/>
</dbReference>
<dbReference type="GO" id="GO:0004515">
    <property type="term" value="F:nicotinate-nucleotide adenylyltransferase activity"/>
    <property type="evidence" value="ECO:0007669"/>
    <property type="project" value="UniProtKB-UniRule"/>
</dbReference>
<dbReference type="GO" id="GO:0009435">
    <property type="term" value="P:NAD biosynthetic process"/>
    <property type="evidence" value="ECO:0007669"/>
    <property type="project" value="UniProtKB-UniRule"/>
</dbReference>
<dbReference type="CDD" id="cd02165">
    <property type="entry name" value="NMNAT"/>
    <property type="match status" value="1"/>
</dbReference>
<dbReference type="Gene3D" id="3.40.50.620">
    <property type="entry name" value="HUPs"/>
    <property type="match status" value="1"/>
</dbReference>
<dbReference type="HAMAP" id="MF_00244">
    <property type="entry name" value="NaMN_adenylyltr"/>
    <property type="match status" value="1"/>
</dbReference>
<dbReference type="InterPro" id="IPR004821">
    <property type="entry name" value="Cyt_trans-like"/>
</dbReference>
<dbReference type="InterPro" id="IPR005248">
    <property type="entry name" value="NadD/NMNAT"/>
</dbReference>
<dbReference type="InterPro" id="IPR014729">
    <property type="entry name" value="Rossmann-like_a/b/a_fold"/>
</dbReference>
<dbReference type="NCBIfam" id="TIGR00125">
    <property type="entry name" value="cyt_tran_rel"/>
    <property type="match status" value="1"/>
</dbReference>
<dbReference type="NCBIfam" id="TIGR00482">
    <property type="entry name" value="nicotinate (nicotinamide) nucleotide adenylyltransferase"/>
    <property type="match status" value="1"/>
</dbReference>
<dbReference type="NCBIfam" id="NF000840">
    <property type="entry name" value="PRK00071.1-3"/>
    <property type="match status" value="1"/>
</dbReference>
<dbReference type="PANTHER" id="PTHR39321">
    <property type="entry name" value="NICOTINATE-NUCLEOTIDE ADENYLYLTRANSFERASE-RELATED"/>
    <property type="match status" value="1"/>
</dbReference>
<dbReference type="PANTHER" id="PTHR39321:SF3">
    <property type="entry name" value="PHOSPHOPANTETHEINE ADENYLYLTRANSFERASE"/>
    <property type="match status" value="1"/>
</dbReference>
<dbReference type="Pfam" id="PF01467">
    <property type="entry name" value="CTP_transf_like"/>
    <property type="match status" value="1"/>
</dbReference>
<dbReference type="SUPFAM" id="SSF52374">
    <property type="entry name" value="Nucleotidylyl transferase"/>
    <property type="match status" value="1"/>
</dbReference>